<name>SERA_ECO57</name>
<evidence type="ECO:0000250" key="1"/>
<evidence type="ECO:0000250" key="2">
    <source>
        <dbReference type="UniProtKB" id="P0A9T0"/>
    </source>
</evidence>
<evidence type="ECO:0000255" key="3">
    <source>
        <dbReference type="PROSITE-ProRule" id="PRU01007"/>
    </source>
</evidence>
<evidence type="ECO:0000305" key="4"/>
<reference key="1">
    <citation type="journal article" date="2001" name="Nature">
        <title>Genome sequence of enterohaemorrhagic Escherichia coli O157:H7.</title>
        <authorList>
            <person name="Perna N.T."/>
            <person name="Plunkett G. III"/>
            <person name="Burland V."/>
            <person name="Mau B."/>
            <person name="Glasner J.D."/>
            <person name="Rose D.J."/>
            <person name="Mayhew G.F."/>
            <person name="Evans P.S."/>
            <person name="Gregor J."/>
            <person name="Kirkpatrick H.A."/>
            <person name="Posfai G."/>
            <person name="Hackett J."/>
            <person name="Klink S."/>
            <person name="Boutin A."/>
            <person name="Shao Y."/>
            <person name="Miller L."/>
            <person name="Grotbeck E.J."/>
            <person name="Davis N.W."/>
            <person name="Lim A."/>
            <person name="Dimalanta E.T."/>
            <person name="Potamousis K."/>
            <person name="Apodaca J."/>
            <person name="Anantharaman T.S."/>
            <person name="Lin J."/>
            <person name="Yen G."/>
            <person name="Schwartz D.C."/>
            <person name="Welch R.A."/>
            <person name="Blattner F.R."/>
        </authorList>
    </citation>
    <scope>NUCLEOTIDE SEQUENCE [LARGE SCALE GENOMIC DNA]</scope>
    <source>
        <strain>O157:H7 / EDL933 / ATCC 700927 / EHEC</strain>
    </source>
</reference>
<reference key="2">
    <citation type="journal article" date="2001" name="DNA Res.">
        <title>Complete genome sequence of enterohemorrhagic Escherichia coli O157:H7 and genomic comparison with a laboratory strain K-12.</title>
        <authorList>
            <person name="Hayashi T."/>
            <person name="Makino K."/>
            <person name="Ohnishi M."/>
            <person name="Kurokawa K."/>
            <person name="Ishii K."/>
            <person name="Yokoyama K."/>
            <person name="Han C.-G."/>
            <person name="Ohtsubo E."/>
            <person name="Nakayama K."/>
            <person name="Murata T."/>
            <person name="Tanaka M."/>
            <person name="Tobe T."/>
            <person name="Iida T."/>
            <person name="Takami H."/>
            <person name="Honda T."/>
            <person name="Sasakawa C."/>
            <person name="Ogasawara N."/>
            <person name="Yasunaga T."/>
            <person name="Kuhara S."/>
            <person name="Shiba T."/>
            <person name="Hattori M."/>
            <person name="Shinagawa H."/>
        </authorList>
    </citation>
    <scope>NUCLEOTIDE SEQUENCE [LARGE SCALE GENOMIC DNA]</scope>
    <source>
        <strain>O157:H7 / Sakai / RIMD 0509952 / EHEC</strain>
    </source>
</reference>
<dbReference type="EC" id="1.1.1.95" evidence="2"/>
<dbReference type="EC" id="1.1.1.399" evidence="2"/>
<dbReference type="EMBL" id="AE005174">
    <property type="protein sequence ID" value="AAG58040.1"/>
    <property type="molecule type" value="Genomic_DNA"/>
</dbReference>
<dbReference type="EMBL" id="BA000007">
    <property type="protein sequence ID" value="BAB37207.1"/>
    <property type="molecule type" value="Genomic_DNA"/>
</dbReference>
<dbReference type="PIR" id="D85947">
    <property type="entry name" value="D85947"/>
</dbReference>
<dbReference type="PIR" id="H91101">
    <property type="entry name" value="H91101"/>
</dbReference>
<dbReference type="RefSeq" id="NP_311811.1">
    <property type="nucleotide sequence ID" value="NC_002695.1"/>
</dbReference>
<dbReference type="RefSeq" id="WP_001151604.1">
    <property type="nucleotide sequence ID" value="NZ_VOAI01000003.1"/>
</dbReference>
<dbReference type="SMR" id="P0A9T2"/>
<dbReference type="STRING" id="155864.Z4251"/>
<dbReference type="GeneID" id="916388"/>
<dbReference type="GeneID" id="93779086"/>
<dbReference type="KEGG" id="ece:Z4251"/>
<dbReference type="KEGG" id="ecs:ECs_3784"/>
<dbReference type="PATRIC" id="fig|386585.9.peg.3948"/>
<dbReference type="eggNOG" id="COG0111">
    <property type="taxonomic scope" value="Bacteria"/>
</dbReference>
<dbReference type="HOGENOM" id="CLU_019796_9_2_6"/>
<dbReference type="OMA" id="SKGCWEV"/>
<dbReference type="SABIO-RK" id="P0A9T2"/>
<dbReference type="UniPathway" id="UPA00135">
    <property type="reaction ID" value="UER00196"/>
</dbReference>
<dbReference type="Proteomes" id="UP000000558">
    <property type="component" value="Chromosome"/>
</dbReference>
<dbReference type="Proteomes" id="UP000002519">
    <property type="component" value="Chromosome"/>
</dbReference>
<dbReference type="GO" id="GO:0005829">
    <property type="term" value="C:cytosol"/>
    <property type="evidence" value="ECO:0007669"/>
    <property type="project" value="UniProtKB-ARBA"/>
</dbReference>
<dbReference type="GO" id="GO:0051287">
    <property type="term" value="F:NAD binding"/>
    <property type="evidence" value="ECO:0007669"/>
    <property type="project" value="InterPro"/>
</dbReference>
<dbReference type="GO" id="GO:0004617">
    <property type="term" value="F:phosphoglycerate dehydrogenase activity"/>
    <property type="evidence" value="ECO:0007669"/>
    <property type="project" value="UniProtKB-EC"/>
</dbReference>
<dbReference type="GO" id="GO:0006564">
    <property type="term" value="P:L-serine biosynthetic process"/>
    <property type="evidence" value="ECO:0007669"/>
    <property type="project" value="UniProtKB-KW"/>
</dbReference>
<dbReference type="CDD" id="cd04901">
    <property type="entry name" value="ACT_3PGDH"/>
    <property type="match status" value="1"/>
</dbReference>
<dbReference type="CDD" id="cd12176">
    <property type="entry name" value="PGDH_3"/>
    <property type="match status" value="1"/>
</dbReference>
<dbReference type="FunFam" id="3.30.70.260:FF:000007">
    <property type="entry name" value="D-3-phosphoglycerate dehydrogenase"/>
    <property type="match status" value="1"/>
</dbReference>
<dbReference type="FunFam" id="3.40.50.720:FF:000041">
    <property type="entry name" value="D-3-phosphoglycerate dehydrogenase"/>
    <property type="match status" value="1"/>
</dbReference>
<dbReference type="Gene3D" id="3.30.70.260">
    <property type="match status" value="1"/>
</dbReference>
<dbReference type="Gene3D" id="3.40.50.720">
    <property type="entry name" value="NAD(P)-binding Rossmann-like Domain"/>
    <property type="match status" value="2"/>
</dbReference>
<dbReference type="InterPro" id="IPR045865">
    <property type="entry name" value="ACT-like_dom_sf"/>
</dbReference>
<dbReference type="InterPro" id="IPR002912">
    <property type="entry name" value="ACT_dom"/>
</dbReference>
<dbReference type="InterPro" id="IPR054480">
    <property type="entry name" value="AHAS_small-like_ACT"/>
</dbReference>
<dbReference type="InterPro" id="IPR050223">
    <property type="entry name" value="D-isomer_2-hydroxyacid_DH"/>
</dbReference>
<dbReference type="InterPro" id="IPR006139">
    <property type="entry name" value="D-isomer_2_OHA_DH_cat_dom"/>
</dbReference>
<dbReference type="InterPro" id="IPR029753">
    <property type="entry name" value="D-isomer_DH_CS"/>
</dbReference>
<dbReference type="InterPro" id="IPR029752">
    <property type="entry name" value="D-isomer_DH_CS1"/>
</dbReference>
<dbReference type="InterPro" id="IPR006140">
    <property type="entry name" value="D-isomer_DH_NAD-bd"/>
</dbReference>
<dbReference type="InterPro" id="IPR036291">
    <property type="entry name" value="NAD(P)-bd_dom_sf"/>
</dbReference>
<dbReference type="NCBIfam" id="NF008759">
    <property type="entry name" value="PRK11790.1"/>
    <property type="match status" value="1"/>
</dbReference>
<dbReference type="PANTHER" id="PTHR10996">
    <property type="entry name" value="2-HYDROXYACID DEHYDROGENASE-RELATED"/>
    <property type="match status" value="1"/>
</dbReference>
<dbReference type="PANTHER" id="PTHR10996:SF282">
    <property type="entry name" value="D-3-PHOSPHOGLYCERATE DEHYDROGENASE 1-RELATED"/>
    <property type="match status" value="1"/>
</dbReference>
<dbReference type="Pfam" id="PF00389">
    <property type="entry name" value="2-Hacid_dh"/>
    <property type="match status" value="1"/>
</dbReference>
<dbReference type="Pfam" id="PF02826">
    <property type="entry name" value="2-Hacid_dh_C"/>
    <property type="match status" value="1"/>
</dbReference>
<dbReference type="Pfam" id="PF22629">
    <property type="entry name" value="ACT_AHAS_ss"/>
    <property type="match status" value="1"/>
</dbReference>
<dbReference type="SUPFAM" id="SSF55021">
    <property type="entry name" value="ACT-like"/>
    <property type="match status" value="1"/>
</dbReference>
<dbReference type="SUPFAM" id="SSF52283">
    <property type="entry name" value="Formate/glycerate dehydrogenase catalytic domain-like"/>
    <property type="match status" value="1"/>
</dbReference>
<dbReference type="SUPFAM" id="SSF51735">
    <property type="entry name" value="NAD(P)-binding Rossmann-fold domains"/>
    <property type="match status" value="1"/>
</dbReference>
<dbReference type="PROSITE" id="PS51671">
    <property type="entry name" value="ACT"/>
    <property type="match status" value="1"/>
</dbReference>
<dbReference type="PROSITE" id="PS00065">
    <property type="entry name" value="D_2_HYDROXYACID_DH_1"/>
    <property type="match status" value="1"/>
</dbReference>
<dbReference type="PROSITE" id="PS00670">
    <property type="entry name" value="D_2_HYDROXYACID_DH_2"/>
    <property type="match status" value="1"/>
</dbReference>
<dbReference type="PROSITE" id="PS00671">
    <property type="entry name" value="D_2_HYDROXYACID_DH_3"/>
    <property type="match status" value="1"/>
</dbReference>
<keyword id="KW-0028">Amino-acid biosynthesis</keyword>
<keyword id="KW-0520">NAD</keyword>
<keyword id="KW-0560">Oxidoreductase</keyword>
<keyword id="KW-1185">Reference proteome</keyword>
<keyword id="KW-0718">Serine biosynthesis</keyword>
<comment type="function">
    <text evidence="2">Catalyzes the reversible oxidation of 3-phospho-D-glycerate to 3-phosphonooxypyruvate, the first step of the phosphorylated L-serine biosynthesis pathway. Also catalyzes the reversible oxidation of 2-hydroxyglutarate to 2-oxoglutarate.</text>
</comment>
<comment type="catalytic activity">
    <reaction evidence="2">
        <text>(2R)-3-phosphoglycerate + NAD(+) = 3-phosphooxypyruvate + NADH + H(+)</text>
        <dbReference type="Rhea" id="RHEA:12641"/>
        <dbReference type="ChEBI" id="CHEBI:15378"/>
        <dbReference type="ChEBI" id="CHEBI:18110"/>
        <dbReference type="ChEBI" id="CHEBI:57540"/>
        <dbReference type="ChEBI" id="CHEBI:57945"/>
        <dbReference type="ChEBI" id="CHEBI:58272"/>
        <dbReference type="EC" id="1.1.1.95"/>
    </reaction>
</comment>
<comment type="catalytic activity">
    <reaction evidence="2">
        <text>(R)-2-hydroxyglutarate + NAD(+) = 2-oxoglutarate + NADH + H(+)</text>
        <dbReference type="Rhea" id="RHEA:49612"/>
        <dbReference type="ChEBI" id="CHEBI:15378"/>
        <dbReference type="ChEBI" id="CHEBI:15801"/>
        <dbReference type="ChEBI" id="CHEBI:16810"/>
        <dbReference type="ChEBI" id="CHEBI:57540"/>
        <dbReference type="ChEBI" id="CHEBI:57945"/>
        <dbReference type="EC" id="1.1.1.399"/>
    </reaction>
</comment>
<comment type="activity regulation">
    <text evidence="2">Displays feedback inhibition by L-serine.</text>
</comment>
<comment type="pathway">
    <text>Amino-acid biosynthesis; L-serine biosynthesis; L-serine from 3-phospho-D-glycerate: step 1/3.</text>
</comment>
<comment type="subunit">
    <text evidence="2">Homotetramer.</text>
</comment>
<comment type="similarity">
    <text evidence="4">Belongs to the D-isomer specific 2-hydroxyacid dehydrogenase family.</text>
</comment>
<gene>
    <name type="primary">serA</name>
    <name type="ordered locus">Z4251</name>
    <name type="ordered locus">ECs3784</name>
</gene>
<accession>P0A9T2</accession>
<accession>P08328</accession>
<accession>Q47633</accession>
<organism>
    <name type="scientific">Escherichia coli O157:H7</name>
    <dbReference type="NCBI Taxonomy" id="83334"/>
    <lineage>
        <taxon>Bacteria</taxon>
        <taxon>Pseudomonadati</taxon>
        <taxon>Pseudomonadota</taxon>
        <taxon>Gammaproteobacteria</taxon>
        <taxon>Enterobacterales</taxon>
        <taxon>Enterobacteriaceae</taxon>
        <taxon>Escherichia</taxon>
    </lineage>
</organism>
<feature type="initiator methionine" description="Removed" evidence="1">
    <location>
        <position position="1"/>
    </location>
</feature>
<feature type="chain" id="PRO_0000076000" description="D-3-phosphoglycerate dehydrogenase">
    <location>
        <begin position="2"/>
        <end position="410"/>
    </location>
</feature>
<feature type="domain" description="ACT" evidence="3">
    <location>
        <begin position="339"/>
        <end position="410"/>
    </location>
</feature>
<feature type="active site" evidence="1">
    <location>
        <position position="240"/>
    </location>
</feature>
<feature type="active site" evidence="1">
    <location>
        <position position="269"/>
    </location>
</feature>
<feature type="active site" description="Proton donor" evidence="1">
    <location>
        <position position="292"/>
    </location>
</feature>
<feature type="binding site" evidence="2">
    <location>
        <begin position="161"/>
        <end position="162"/>
    </location>
    <ligand>
        <name>NAD(+)</name>
        <dbReference type="ChEBI" id="CHEBI:57540"/>
    </ligand>
</feature>
<feature type="binding site" evidence="2">
    <location>
        <position position="181"/>
    </location>
    <ligand>
        <name>NAD(+)</name>
        <dbReference type="ChEBI" id="CHEBI:57540"/>
    </ligand>
</feature>
<feature type="binding site" evidence="2">
    <location>
        <begin position="238"/>
        <end position="240"/>
    </location>
    <ligand>
        <name>NAD(+)</name>
        <dbReference type="ChEBI" id="CHEBI:57540"/>
    </ligand>
</feature>
<feature type="binding site" evidence="2">
    <location>
        <position position="264"/>
    </location>
    <ligand>
        <name>NAD(+)</name>
        <dbReference type="ChEBI" id="CHEBI:57540"/>
    </ligand>
</feature>
<feature type="binding site" evidence="2">
    <location>
        <begin position="292"/>
        <end position="295"/>
    </location>
    <ligand>
        <name>NAD(+)</name>
        <dbReference type="ChEBI" id="CHEBI:57540"/>
    </ligand>
</feature>
<proteinExistence type="inferred from homology"/>
<protein>
    <recommendedName>
        <fullName>D-3-phosphoglycerate dehydrogenase</fullName>
        <shortName>PGDH</shortName>
        <ecNumber evidence="2">1.1.1.95</ecNumber>
    </recommendedName>
    <alternativeName>
        <fullName evidence="2">2-oxoglutarate reductase</fullName>
        <ecNumber evidence="2">1.1.1.399</ecNumber>
    </alternativeName>
</protein>
<sequence>MAKVSLEKDKIKFLLVEGVHQKALESLRAAGYTNIEFHKGALDDEQLKESIRDAHFIGLRSRTHLTEDVINAAEKLVAIGCFCIGTNQVDLDAAAKRGIPVFNAPFSNTRSVAELVIGELLLLLRGVPEANAKAHRGVWNKLAAGSFEARGKKLGIIGYGHIGTQLGILAESLGMYVYFYDIENKLPLGNATQVQHLSDLLNMSDVVSLHVPENPSTKNMMGAKEISLMKPGSLLINASRGTVVDIPALCDALASKHLAGAAIDVFPTEPATNSDPFTSPLCEFDNVLLTPHIGGSTQEAQENIGLEVAGKLIKYSDNGSTLSAVNFPEVSLPLHGGRRLMHIHENRPGVLTALNKIFAEQGVNIAAQYLQTSAQMGYVVIDIEADEDVAEKALQAMKAIPGTIRARLLY</sequence>